<accession>Q9X235</accession>
<protein>
    <recommendedName>
        <fullName evidence="1">Putative gluconeogenesis factor</fullName>
    </recommendedName>
</protein>
<feature type="chain" id="PRO_0000107819" description="Putative gluconeogenesis factor">
    <location>
        <begin position="1"/>
        <end position="314"/>
    </location>
</feature>
<evidence type="ECO:0000255" key="1">
    <source>
        <dbReference type="HAMAP-Rule" id="MF_00973"/>
    </source>
</evidence>
<sequence>MKVVAVGGGTGLSTLLKGLKNIDSFEITAVVSVTDEGGSSGKLRKELNVPPPGDVRNNIVALAKDEDLLAKLMSYRFSEGSFKGHSLGNLIIAALTKIEGSFSEAIRILERVLAIKGRVLPVSEDHARLVARFEDGEEVIGETNIVRKGGKIVEVRLDRPIDALPEVLEAIERADIIIFGPGSLYTSIITNVLVNGVKDAIKKSKAKKIYVCNLMTQPGETTGYRVSDHVKELERYLEQSVDFVLVNTRKPSEEVLERYRKEGSDFVEIDAENIQNTILAEPFLVEIVDPSDGQRKIRHDSVKLADVIERISRW</sequence>
<proteinExistence type="inferred from homology"/>
<comment type="function">
    <text evidence="1">Required for morphogenesis under gluconeogenic growth conditions.</text>
</comment>
<comment type="subcellular location">
    <subcellularLocation>
        <location evidence="1">Cytoplasm</location>
    </subcellularLocation>
</comment>
<comment type="similarity">
    <text evidence="1">Belongs to the gluconeogenesis factor family.</text>
</comment>
<dbReference type="EMBL" id="AE000512">
    <property type="protein sequence ID" value="AAD36776.1"/>
    <property type="molecule type" value="Genomic_DNA"/>
</dbReference>
<dbReference type="PIR" id="G72221">
    <property type="entry name" value="G72221"/>
</dbReference>
<dbReference type="RefSeq" id="NP_229509.1">
    <property type="nucleotide sequence ID" value="NC_000853.1"/>
</dbReference>
<dbReference type="RefSeq" id="WP_004082225.1">
    <property type="nucleotide sequence ID" value="NZ_CP011107.1"/>
</dbReference>
<dbReference type="SMR" id="Q9X235"/>
<dbReference type="FunCoup" id="Q9X235">
    <property type="interactions" value="54"/>
</dbReference>
<dbReference type="STRING" id="243274.TM_1709"/>
<dbReference type="PaxDb" id="243274-THEMA_05695"/>
<dbReference type="EnsemblBacteria" id="AAD36776">
    <property type="protein sequence ID" value="AAD36776"/>
    <property type="gene ID" value="TM_1709"/>
</dbReference>
<dbReference type="KEGG" id="tma:TM1709"/>
<dbReference type="KEGG" id="tmi:THEMA_05695"/>
<dbReference type="KEGG" id="tmm:Tmari_1717"/>
<dbReference type="KEGG" id="tmw:THMA_1751"/>
<dbReference type="eggNOG" id="COG0391">
    <property type="taxonomic scope" value="Bacteria"/>
</dbReference>
<dbReference type="InParanoid" id="Q9X235"/>
<dbReference type="OrthoDB" id="9783842at2"/>
<dbReference type="Proteomes" id="UP000008183">
    <property type="component" value="Chromosome"/>
</dbReference>
<dbReference type="GO" id="GO:0005737">
    <property type="term" value="C:cytoplasm"/>
    <property type="evidence" value="ECO:0007669"/>
    <property type="project" value="UniProtKB-SubCell"/>
</dbReference>
<dbReference type="GO" id="GO:0043743">
    <property type="term" value="F:LPPG:FO 2-phospho-L-lactate transferase activity"/>
    <property type="evidence" value="ECO:0007669"/>
    <property type="project" value="InterPro"/>
</dbReference>
<dbReference type="GO" id="GO:0008360">
    <property type="term" value="P:regulation of cell shape"/>
    <property type="evidence" value="ECO:0007669"/>
    <property type="project" value="UniProtKB-UniRule"/>
</dbReference>
<dbReference type="CDD" id="cd07187">
    <property type="entry name" value="YvcK_like"/>
    <property type="match status" value="1"/>
</dbReference>
<dbReference type="Gene3D" id="3.40.50.10680">
    <property type="entry name" value="CofD-like domains"/>
    <property type="match status" value="1"/>
</dbReference>
<dbReference type="HAMAP" id="MF_00973">
    <property type="entry name" value="Gluconeogen_factor"/>
    <property type="match status" value="1"/>
</dbReference>
<dbReference type="InterPro" id="IPR002882">
    <property type="entry name" value="CofD"/>
</dbReference>
<dbReference type="InterPro" id="IPR038136">
    <property type="entry name" value="CofD-like_dom_sf"/>
</dbReference>
<dbReference type="InterPro" id="IPR010119">
    <property type="entry name" value="Gluconeogen_factor"/>
</dbReference>
<dbReference type="NCBIfam" id="TIGR01826">
    <property type="entry name" value="CofD_related"/>
    <property type="match status" value="1"/>
</dbReference>
<dbReference type="PANTHER" id="PTHR30135:SF3">
    <property type="entry name" value="GLUCONEOGENESIS FACTOR-RELATED"/>
    <property type="match status" value="1"/>
</dbReference>
<dbReference type="PANTHER" id="PTHR30135">
    <property type="entry name" value="UNCHARACTERIZED PROTEIN YVCK-RELATED"/>
    <property type="match status" value="1"/>
</dbReference>
<dbReference type="Pfam" id="PF01933">
    <property type="entry name" value="CofD"/>
    <property type="match status" value="1"/>
</dbReference>
<dbReference type="SUPFAM" id="SSF142338">
    <property type="entry name" value="CofD-like"/>
    <property type="match status" value="1"/>
</dbReference>
<keyword id="KW-0963">Cytoplasm</keyword>
<keyword id="KW-1185">Reference proteome</keyword>
<reference key="1">
    <citation type="journal article" date="1999" name="Nature">
        <title>Evidence for lateral gene transfer between Archaea and Bacteria from genome sequence of Thermotoga maritima.</title>
        <authorList>
            <person name="Nelson K.E."/>
            <person name="Clayton R.A."/>
            <person name="Gill S.R."/>
            <person name="Gwinn M.L."/>
            <person name="Dodson R.J."/>
            <person name="Haft D.H."/>
            <person name="Hickey E.K."/>
            <person name="Peterson J.D."/>
            <person name="Nelson W.C."/>
            <person name="Ketchum K.A."/>
            <person name="McDonald L.A."/>
            <person name="Utterback T.R."/>
            <person name="Malek J.A."/>
            <person name="Linher K.D."/>
            <person name="Garrett M.M."/>
            <person name="Stewart A.M."/>
            <person name="Cotton M.D."/>
            <person name="Pratt M.S."/>
            <person name="Phillips C.A."/>
            <person name="Richardson D.L."/>
            <person name="Heidelberg J.F."/>
            <person name="Sutton G.G."/>
            <person name="Fleischmann R.D."/>
            <person name="Eisen J.A."/>
            <person name="White O."/>
            <person name="Salzberg S.L."/>
            <person name="Smith H.O."/>
            <person name="Venter J.C."/>
            <person name="Fraser C.M."/>
        </authorList>
    </citation>
    <scope>NUCLEOTIDE SEQUENCE [LARGE SCALE GENOMIC DNA]</scope>
    <source>
        <strain>ATCC 43589 / DSM 3109 / JCM 10099 / NBRC 100826 / MSB8</strain>
    </source>
</reference>
<organism>
    <name type="scientific">Thermotoga maritima (strain ATCC 43589 / DSM 3109 / JCM 10099 / NBRC 100826 / MSB8)</name>
    <dbReference type="NCBI Taxonomy" id="243274"/>
    <lineage>
        <taxon>Bacteria</taxon>
        <taxon>Thermotogati</taxon>
        <taxon>Thermotogota</taxon>
        <taxon>Thermotogae</taxon>
        <taxon>Thermotogales</taxon>
        <taxon>Thermotogaceae</taxon>
        <taxon>Thermotoga</taxon>
    </lineage>
</organism>
<name>GNGF_THEMA</name>
<gene>
    <name type="ordered locus">TM_1709</name>
</gene>